<reference key="1">
    <citation type="submission" date="2006-08" db="EMBL/GenBank/DDBJ databases">
        <authorList>
            <consortium name="NIH - Mammalian Gene Collection (MGC) project"/>
        </authorList>
    </citation>
    <scope>NUCLEOTIDE SEQUENCE [LARGE SCALE MRNA]</scope>
    <source>
        <strain>Hereford</strain>
        <tissue>Fetal cerebellum</tissue>
    </source>
</reference>
<gene>
    <name evidence="5" type="primary">HACD4</name>
    <name evidence="5" type="synonym">PTPLAD2</name>
</gene>
<evidence type="ECO:0000250" key="1">
    <source>
        <dbReference type="UniProtKB" id="P40857"/>
    </source>
</evidence>
<evidence type="ECO:0000250" key="2">
    <source>
        <dbReference type="UniProtKB" id="Q5VWC8"/>
    </source>
</evidence>
<evidence type="ECO:0000250" key="3">
    <source>
        <dbReference type="UniProtKB" id="Q9P035"/>
    </source>
</evidence>
<evidence type="ECO:0000255" key="4"/>
<evidence type="ECO:0000305" key="5"/>
<feature type="chain" id="PRO_0000313729" description="Very-long-chain (3R)-3-hydroxyacyl-CoA dehydratase 4">
    <location>
        <begin position="1"/>
        <end position="231"/>
    </location>
</feature>
<feature type="topological domain" description="Cytoplasmic" evidence="4">
    <location>
        <begin position="1"/>
        <end position="19"/>
    </location>
</feature>
<feature type="transmembrane region" description="Helical" evidence="4">
    <location>
        <begin position="20"/>
        <end position="40"/>
    </location>
</feature>
<feature type="topological domain" description="Lumenal" evidence="4">
    <location>
        <begin position="41"/>
        <end position="56"/>
    </location>
</feature>
<feature type="transmembrane region" description="Helical" evidence="4">
    <location>
        <begin position="57"/>
        <end position="77"/>
    </location>
</feature>
<feature type="topological domain" description="Cytoplasmic" evidence="4">
    <location>
        <begin position="78"/>
        <end position="112"/>
    </location>
</feature>
<feature type="transmembrane region" description="Helical" evidence="4">
    <location>
        <begin position="113"/>
        <end position="133"/>
    </location>
</feature>
<feature type="topological domain" description="Lumenal" evidence="4">
    <location>
        <begin position="134"/>
        <end position="135"/>
    </location>
</feature>
<feature type="transmembrane region" description="Helical" evidence="4">
    <location>
        <begin position="136"/>
        <end position="156"/>
    </location>
</feature>
<feature type="topological domain" description="Cytoplasmic" evidence="4">
    <location>
        <position position="157"/>
    </location>
</feature>
<feature type="transmembrane region" description="Helical" evidence="4">
    <location>
        <begin position="158"/>
        <end position="178"/>
    </location>
</feature>
<feature type="topological domain" description="Lumenal" evidence="4">
    <location>
        <begin position="179"/>
        <end position="189"/>
    </location>
</feature>
<feature type="transmembrane region" description="Helical" evidence="4">
    <location>
        <begin position="190"/>
        <end position="210"/>
    </location>
</feature>
<feature type="topological domain" description="Cytoplasmic" evidence="4">
    <location>
        <begin position="211"/>
        <end position="231"/>
    </location>
</feature>
<feature type="active site" evidence="1">
    <location>
        <position position="156"/>
    </location>
</feature>
<feature type="active site" evidence="1">
    <location>
        <position position="163"/>
    </location>
</feature>
<accession>Q0P5C7</accession>
<comment type="function">
    <text evidence="2">Catalyzes the third of the four reactions of the long-chain fatty acids elongation cycle. This endoplasmic reticulum-bound enzymatic process, allows the addition of two carbons to the chain of long- and very long-chain fatty acids/VLCFAs per cycle. This enzyme catalyzes the dehydration of the 3-hydroxyacyl-CoA intermediate into trans-2,3-enoyl-CoA, within each cycle of fatty acid elongation. Thereby, it participates in the production of VLCFAs of different chain lengths that are involved in multiple biological processes as precursors of membrane lipids and lipid mediators.</text>
</comment>
<comment type="catalytic activity">
    <reaction evidence="2">
        <text>a very-long-chain (3R)-3-hydroxyacyl-CoA = a very-long-chain (2E)-enoyl-CoA + H2O</text>
        <dbReference type="Rhea" id="RHEA:45812"/>
        <dbReference type="ChEBI" id="CHEBI:15377"/>
        <dbReference type="ChEBI" id="CHEBI:83728"/>
        <dbReference type="ChEBI" id="CHEBI:85440"/>
        <dbReference type="EC" id="4.2.1.134"/>
    </reaction>
    <physiologicalReaction direction="left-to-right" evidence="2">
        <dbReference type="Rhea" id="RHEA:45813"/>
    </physiologicalReaction>
</comment>
<comment type="catalytic activity">
    <reaction evidence="2">
        <text>(3R)-hydroxyhexadecanoyl-CoA = (2E)-hexadecenoyl-CoA + H2O</text>
        <dbReference type="Rhea" id="RHEA:39159"/>
        <dbReference type="ChEBI" id="CHEBI:15377"/>
        <dbReference type="ChEBI" id="CHEBI:61526"/>
        <dbReference type="ChEBI" id="CHEBI:74278"/>
    </reaction>
    <physiologicalReaction direction="left-to-right" evidence="2">
        <dbReference type="Rhea" id="RHEA:39160"/>
    </physiologicalReaction>
</comment>
<comment type="pathway">
    <text evidence="2">Lipid metabolism; fatty acid biosynthesis.</text>
</comment>
<comment type="subunit">
    <text evidence="2">May interact with enzymes of the ELO family (including ELOVL1); with those enzymes that mediate condensation, the first of the four steps of the reaction cycle responsible for fatty acids elongation, may be part of a larger fatty acids elongase complex.</text>
</comment>
<comment type="subcellular location">
    <subcellularLocation>
        <location evidence="2">Endoplasmic reticulum membrane</location>
        <topology evidence="2">Multi-pass membrane protein</topology>
    </subcellularLocation>
</comment>
<comment type="similarity">
    <text evidence="5">Belongs to the very long-chain fatty acids dehydratase HACD family.</text>
</comment>
<comment type="caution">
    <text evidence="2">Shares some similarity with tyrosine phosphatase proteins but it has probably no phosphatase activity.</text>
</comment>
<keyword id="KW-0256">Endoplasmic reticulum</keyword>
<keyword id="KW-0275">Fatty acid biosynthesis</keyword>
<keyword id="KW-0276">Fatty acid metabolism</keyword>
<keyword id="KW-0444">Lipid biosynthesis</keyword>
<keyword id="KW-0443">Lipid metabolism</keyword>
<keyword id="KW-0456">Lyase</keyword>
<keyword id="KW-0472">Membrane</keyword>
<keyword id="KW-1185">Reference proteome</keyword>
<keyword id="KW-0812">Transmembrane</keyword>
<keyword id="KW-1133">Transmembrane helix</keyword>
<proteinExistence type="evidence at transcript level"/>
<organism>
    <name type="scientific">Bos taurus</name>
    <name type="common">Bovine</name>
    <dbReference type="NCBI Taxonomy" id="9913"/>
    <lineage>
        <taxon>Eukaryota</taxon>
        <taxon>Metazoa</taxon>
        <taxon>Chordata</taxon>
        <taxon>Craniata</taxon>
        <taxon>Vertebrata</taxon>
        <taxon>Euteleostomi</taxon>
        <taxon>Mammalia</taxon>
        <taxon>Eutheria</taxon>
        <taxon>Laurasiatheria</taxon>
        <taxon>Artiodactyla</taxon>
        <taxon>Ruminantia</taxon>
        <taxon>Pecora</taxon>
        <taxon>Bovidae</taxon>
        <taxon>Bovinae</taxon>
        <taxon>Bos</taxon>
    </lineage>
</organism>
<sequence>MGPVALPTWLQPRYRKNAYLFIYYLIQFCGHSWIFTNMTVRFFSFGKDSMVDTFYAIGLVMQLCQSISLLELLHIYVGIESNHLLPRILQLTERIIVLFMVITSQEEVQEKYVVCVLFIFRNLLDMVRYTYSMLSVIGISYAVLTWFSQTLWMPIYPLCVLAEAFTIYQSLPYFESFGTYSTKLPFDLSFYFPYVLKIYLMMLFVGMYFTYNHLYSERRDILRVFPNKKKM</sequence>
<protein>
    <recommendedName>
        <fullName evidence="5">Very-long-chain (3R)-3-hydroxyacyl-CoA dehydratase 4</fullName>
        <ecNumber evidence="3">4.2.1.134</ecNumber>
    </recommendedName>
    <alternativeName>
        <fullName evidence="5">3-hydroxyacyl-CoA dehydratase 4</fullName>
        <shortName evidence="5">HACD4</shortName>
    </alternativeName>
    <alternativeName>
        <fullName evidence="5">Protein-tyrosine phosphatase-like A domain-containing protein 2</fullName>
    </alternativeName>
</protein>
<name>HACD4_BOVIN</name>
<dbReference type="EC" id="4.2.1.134" evidence="3"/>
<dbReference type="EMBL" id="BC120231">
    <property type="protein sequence ID" value="AAI20232.1"/>
    <property type="molecule type" value="mRNA"/>
</dbReference>
<dbReference type="RefSeq" id="NP_001069990.1">
    <property type="nucleotide sequence ID" value="NM_001076522.2"/>
</dbReference>
<dbReference type="FunCoup" id="Q0P5C7">
    <property type="interactions" value="155"/>
</dbReference>
<dbReference type="STRING" id="9913.ENSBTAP00000023587"/>
<dbReference type="PaxDb" id="9913-ENSBTAP00000023587"/>
<dbReference type="GeneID" id="618814"/>
<dbReference type="KEGG" id="bta:618814"/>
<dbReference type="CTD" id="401494"/>
<dbReference type="eggNOG" id="KOG3187">
    <property type="taxonomic scope" value="Eukaryota"/>
</dbReference>
<dbReference type="InParanoid" id="Q0P5C7"/>
<dbReference type="OrthoDB" id="46988at2759"/>
<dbReference type="UniPathway" id="UPA00094"/>
<dbReference type="Proteomes" id="UP000009136">
    <property type="component" value="Unplaced"/>
</dbReference>
<dbReference type="GO" id="GO:0005783">
    <property type="term" value="C:endoplasmic reticulum"/>
    <property type="evidence" value="ECO:0000250"/>
    <property type="project" value="UniProtKB"/>
</dbReference>
<dbReference type="GO" id="GO:0005789">
    <property type="term" value="C:endoplasmic reticulum membrane"/>
    <property type="evidence" value="ECO:0000318"/>
    <property type="project" value="GO_Central"/>
</dbReference>
<dbReference type="GO" id="GO:0018812">
    <property type="term" value="F:3-hydroxyacyl-CoA dehydratase activity"/>
    <property type="evidence" value="ECO:0000318"/>
    <property type="project" value="GO_Central"/>
</dbReference>
<dbReference type="GO" id="GO:0019899">
    <property type="term" value="F:enzyme binding"/>
    <property type="evidence" value="ECO:0000250"/>
    <property type="project" value="UniProtKB"/>
</dbReference>
<dbReference type="GO" id="GO:0102158">
    <property type="term" value="F:very-long-chain (3R)-3-hydroxyacyl-CoA dehydratase activity"/>
    <property type="evidence" value="ECO:0000250"/>
    <property type="project" value="UniProtKB"/>
</dbReference>
<dbReference type="GO" id="GO:0030497">
    <property type="term" value="P:fatty acid elongation"/>
    <property type="evidence" value="ECO:0000250"/>
    <property type="project" value="UniProtKB"/>
</dbReference>
<dbReference type="GO" id="GO:0030148">
    <property type="term" value="P:sphingolipid biosynthetic process"/>
    <property type="evidence" value="ECO:0000318"/>
    <property type="project" value="GO_Central"/>
</dbReference>
<dbReference type="GO" id="GO:0042761">
    <property type="term" value="P:very long-chain fatty acid biosynthetic process"/>
    <property type="evidence" value="ECO:0000250"/>
    <property type="project" value="UniProtKB"/>
</dbReference>
<dbReference type="InterPro" id="IPR007482">
    <property type="entry name" value="Tyr_Pase-like_PTPLA"/>
</dbReference>
<dbReference type="PANTHER" id="PTHR11035">
    <property type="entry name" value="VERY-LONG-CHAIN (3R)-3-HYDROXYACYL-COA DEHYDRATASE"/>
    <property type="match status" value="1"/>
</dbReference>
<dbReference type="PANTHER" id="PTHR11035:SF16">
    <property type="entry name" value="VERY-LONG-CHAIN (3R)-3-HYDROXYACYL-COA DEHYDRATASE 4"/>
    <property type="match status" value="1"/>
</dbReference>
<dbReference type="Pfam" id="PF04387">
    <property type="entry name" value="PTPLA"/>
    <property type="match status" value="1"/>
</dbReference>